<proteinExistence type="inferred from homology"/>
<geneLocation type="plasmid">
    <name>pSymB</name>
    <name>megaplasmid 2</name>
</geneLocation>
<comment type="function">
    <text>Glycosyltransferase required for the synthesis of succinoglycan (EPS I). Needed for the addition of the seventh sugar (glucose), catalyzes the formation of a beta-1,3 linkage between the seventh and eighth sugar.</text>
</comment>
<comment type="pathway">
    <text>Glycan metabolism; exopolysaccharide biosynthesis.</text>
</comment>
<comment type="subcellular location">
    <subcellularLocation>
        <location>Cell membrane</location>
        <topology>Peripheral membrane protein</topology>
    </subcellularLocation>
</comment>
<comment type="similarity">
    <text evidence="1">Belongs to the glycosyltransferase 2 family.</text>
</comment>
<feature type="chain" id="PRO_0000059185" description="Succinoglycan biosynthesis protein ExoW">
    <location>
        <begin position="1"/>
        <end position="319"/>
    </location>
</feature>
<feature type="sequence conflict" description="In Ref. 1; AAA16051." evidence="1" ref="1">
    <original>KAMEAIRSYKHTARRQALWSQARRIKRRKLPQFDLLARWLWRDPRLIGSAAELAVGKLSR</original>
    <variation>NGWRRSDPTSIPRGGRRYGARHAG</variation>
    <location>
        <begin position="260"/>
        <end position="319"/>
    </location>
</feature>
<keyword id="KW-1003">Cell membrane</keyword>
<keyword id="KW-0270">Exopolysaccharide synthesis</keyword>
<keyword id="KW-0328">Glycosyltransferase</keyword>
<keyword id="KW-0472">Membrane</keyword>
<keyword id="KW-0614">Plasmid</keyword>
<keyword id="KW-1185">Reference proteome</keyword>
<keyword id="KW-0808">Transferase</keyword>
<evidence type="ECO:0000305" key="1"/>
<dbReference type="EC" id="2.4.-.-"/>
<dbReference type="EMBL" id="L20758">
    <property type="protein sequence ID" value="AAA16051.1"/>
    <property type="molecule type" value="Unassigned_DNA"/>
</dbReference>
<dbReference type="EMBL" id="Z22646">
    <property type="protein sequence ID" value="CAA80361.1"/>
    <property type="molecule type" value="Genomic_DNA"/>
</dbReference>
<dbReference type="EMBL" id="AL591985">
    <property type="protein sequence ID" value="CAC49473.1"/>
    <property type="molecule type" value="Genomic_DNA"/>
</dbReference>
<dbReference type="PIR" id="A95976">
    <property type="entry name" value="A95976"/>
</dbReference>
<dbReference type="PIR" id="E49348">
    <property type="entry name" value="E49348"/>
</dbReference>
<dbReference type="PIR" id="S40175">
    <property type="entry name" value="S40175"/>
</dbReference>
<dbReference type="RefSeq" id="NP_437613.1">
    <property type="nucleotide sequence ID" value="NC_003078.1"/>
</dbReference>
<dbReference type="RefSeq" id="WP_004434930.1">
    <property type="nucleotide sequence ID" value="NC_003078.1"/>
</dbReference>
<dbReference type="SMR" id="P33702"/>
<dbReference type="CAZy" id="GT2">
    <property type="family name" value="Glycosyltransferase Family 2"/>
</dbReference>
<dbReference type="EnsemblBacteria" id="CAC49473">
    <property type="protein sequence ID" value="CAC49473"/>
    <property type="gene ID" value="SM_b21690"/>
</dbReference>
<dbReference type="GeneID" id="25013735"/>
<dbReference type="GeneID" id="89577826"/>
<dbReference type="KEGG" id="sme:SM_b21690"/>
<dbReference type="PATRIC" id="fig|266834.11.peg.6002"/>
<dbReference type="eggNOG" id="COG0463">
    <property type="taxonomic scope" value="Bacteria"/>
</dbReference>
<dbReference type="HOGENOM" id="CLU_072543_0_0_5"/>
<dbReference type="OrthoDB" id="9794124at2"/>
<dbReference type="BioCyc" id="MetaCyc:SM_B21690-MONOMER"/>
<dbReference type="UniPathway" id="UPA00631"/>
<dbReference type="PRO" id="PR:P33702"/>
<dbReference type="Proteomes" id="UP000001976">
    <property type="component" value="Plasmid pSymB"/>
</dbReference>
<dbReference type="GO" id="GO:0005886">
    <property type="term" value="C:plasma membrane"/>
    <property type="evidence" value="ECO:0007669"/>
    <property type="project" value="UniProtKB-SubCell"/>
</dbReference>
<dbReference type="GO" id="GO:0016757">
    <property type="term" value="F:glycosyltransferase activity"/>
    <property type="evidence" value="ECO:0007669"/>
    <property type="project" value="UniProtKB-KW"/>
</dbReference>
<dbReference type="GO" id="GO:0000271">
    <property type="term" value="P:polysaccharide biosynthetic process"/>
    <property type="evidence" value="ECO:0007669"/>
    <property type="project" value="UniProtKB-KW"/>
</dbReference>
<dbReference type="CDD" id="cd00761">
    <property type="entry name" value="Glyco_tranf_GTA_type"/>
    <property type="match status" value="1"/>
</dbReference>
<dbReference type="Gene3D" id="3.90.550.10">
    <property type="entry name" value="Spore Coat Polysaccharide Biosynthesis Protein SpsA, Chain A"/>
    <property type="match status" value="1"/>
</dbReference>
<dbReference type="InterPro" id="IPR001173">
    <property type="entry name" value="Glyco_trans_2-like"/>
</dbReference>
<dbReference type="InterPro" id="IPR050834">
    <property type="entry name" value="Glycosyltransf_2"/>
</dbReference>
<dbReference type="InterPro" id="IPR029044">
    <property type="entry name" value="Nucleotide-diphossugar_trans"/>
</dbReference>
<dbReference type="PANTHER" id="PTHR43685">
    <property type="entry name" value="GLYCOSYLTRANSFERASE"/>
    <property type="match status" value="1"/>
</dbReference>
<dbReference type="PANTHER" id="PTHR43685:SF2">
    <property type="entry name" value="GLYCOSYLTRANSFERASE 2-LIKE DOMAIN-CONTAINING PROTEIN"/>
    <property type="match status" value="1"/>
</dbReference>
<dbReference type="Pfam" id="PF00535">
    <property type="entry name" value="Glycos_transf_2"/>
    <property type="match status" value="1"/>
</dbReference>
<dbReference type="SUPFAM" id="SSF53448">
    <property type="entry name" value="Nucleotide-diphospho-sugar transferases"/>
    <property type="match status" value="1"/>
</dbReference>
<organism>
    <name type="scientific">Rhizobium meliloti (strain 1021)</name>
    <name type="common">Ensifer meliloti</name>
    <name type="synonym">Sinorhizobium meliloti</name>
    <dbReference type="NCBI Taxonomy" id="266834"/>
    <lineage>
        <taxon>Bacteria</taxon>
        <taxon>Pseudomonadati</taxon>
        <taxon>Pseudomonadota</taxon>
        <taxon>Alphaproteobacteria</taxon>
        <taxon>Hyphomicrobiales</taxon>
        <taxon>Rhizobiaceae</taxon>
        <taxon>Sinorhizobium/Ensifer group</taxon>
        <taxon>Sinorhizobium</taxon>
    </lineage>
</organism>
<protein>
    <recommendedName>
        <fullName>Succinoglycan biosynthesis protein ExoW</fullName>
        <ecNumber>2.4.-.-</ecNumber>
    </recommendedName>
</protein>
<gene>
    <name type="primary">exoW</name>
    <name type="ordered locus">RB1073</name>
    <name type="ORF">SMb21690</name>
</gene>
<name>EXOW_RHIME</name>
<accession>P33702</accession>
<accession>Q52927</accession>
<sequence>MAKLTVVIPYYQKEPGILRRALASVFAQTLEDFHVLVIDDESPYPIADELAGLAQEERERITVIRQPNGGPGGARNTGLDNVPADSDFVAFLDSDDVWTPDHLLNAYQSMTRFDADCYWASITGGDAFYYHFGVADLEKSETVTRLSESPLVVELPELQDVMLKNWSFLHMSCMVIGRKLFEKVRFEATLKLAAEDVLFFCDCVLASKRVVLCDAAGAVRGEGLNIFHSIDNDSPQFLKQQFNTWVALDTLEGRYRNRPKAMEAIRSYKHTARRQALWSQARRIKRRKLPQFDLLARWLWRDPRLIGSAAELAVGKLSR</sequence>
<reference key="1">
    <citation type="journal article" date="1993" name="J. Bacteriol.">
        <title>Family of glycosyl transferases needed for the synthesis of succinoglycan by Rhizobium meliloti.</title>
        <authorList>
            <person name="Glucksmann M.A."/>
            <person name="Reuber T.L."/>
            <person name="Walker G.C."/>
        </authorList>
    </citation>
    <scope>NUCLEOTIDE SEQUENCE [GENOMIC DNA]</scope>
    <source>
        <strain>1021</strain>
    </source>
</reference>
<reference key="2">
    <citation type="journal article" date="1993" name="Mol. Plant Microbe Interact.">
        <title>Analysis of the Rhizobium meliloti genes exoU, exoV, exoW, exoT, and exoI involved in exopolysaccharide biosynthesis and nodule invasion: exoU and exoW probably encode glucosyltransferases.</title>
        <authorList>
            <person name="Becker A."/>
            <person name="Kleickmann A."/>
            <person name="Kuester H."/>
            <person name="Keller M."/>
            <person name="Arnold W."/>
            <person name="Puehler A."/>
        </authorList>
    </citation>
    <scope>NUCLEOTIDE SEQUENCE [GENOMIC DNA]</scope>
    <source>
        <strain>RCR2011 / SU47</strain>
    </source>
</reference>
<reference key="3">
    <citation type="journal article" date="2001" name="Proc. Natl. Acad. Sci. U.S.A.">
        <title>The complete sequence of the 1,683-kb pSymB megaplasmid from the N2-fixing endosymbiont Sinorhizobium meliloti.</title>
        <authorList>
            <person name="Finan T.M."/>
            <person name="Weidner S."/>
            <person name="Wong K."/>
            <person name="Buhrmester J."/>
            <person name="Chain P."/>
            <person name="Vorhoelter F.J."/>
            <person name="Hernandez-Lucas I."/>
            <person name="Becker A."/>
            <person name="Cowie A."/>
            <person name="Gouzy J."/>
            <person name="Golding B."/>
            <person name="Puehler A."/>
        </authorList>
    </citation>
    <scope>NUCLEOTIDE SEQUENCE [LARGE SCALE GENOMIC DNA]</scope>
    <source>
        <strain>1021</strain>
    </source>
</reference>
<reference key="4">
    <citation type="journal article" date="2001" name="Science">
        <title>The composite genome of the legume symbiont Sinorhizobium meliloti.</title>
        <authorList>
            <person name="Galibert F."/>
            <person name="Finan T.M."/>
            <person name="Long S.R."/>
            <person name="Puehler A."/>
            <person name="Abola P."/>
            <person name="Ampe F."/>
            <person name="Barloy-Hubler F."/>
            <person name="Barnett M.J."/>
            <person name="Becker A."/>
            <person name="Boistard P."/>
            <person name="Bothe G."/>
            <person name="Boutry M."/>
            <person name="Bowser L."/>
            <person name="Buhrmester J."/>
            <person name="Cadieu E."/>
            <person name="Capela D."/>
            <person name="Chain P."/>
            <person name="Cowie A."/>
            <person name="Davis R.W."/>
            <person name="Dreano S."/>
            <person name="Federspiel N.A."/>
            <person name="Fisher R.F."/>
            <person name="Gloux S."/>
            <person name="Godrie T."/>
            <person name="Goffeau A."/>
            <person name="Golding B."/>
            <person name="Gouzy J."/>
            <person name="Gurjal M."/>
            <person name="Hernandez-Lucas I."/>
            <person name="Hong A."/>
            <person name="Huizar L."/>
            <person name="Hyman R.W."/>
            <person name="Jones T."/>
            <person name="Kahn D."/>
            <person name="Kahn M.L."/>
            <person name="Kalman S."/>
            <person name="Keating D.H."/>
            <person name="Kiss E."/>
            <person name="Komp C."/>
            <person name="Lelaure V."/>
            <person name="Masuy D."/>
            <person name="Palm C."/>
            <person name="Peck M.C."/>
            <person name="Pohl T.M."/>
            <person name="Portetelle D."/>
            <person name="Purnelle B."/>
            <person name="Ramsperger U."/>
            <person name="Surzycki R."/>
            <person name="Thebault P."/>
            <person name="Vandenbol M."/>
            <person name="Vorhoelter F.J."/>
            <person name="Weidner S."/>
            <person name="Wells D.H."/>
            <person name="Wong K."/>
            <person name="Yeh K.-C."/>
            <person name="Batut J."/>
        </authorList>
    </citation>
    <scope>NUCLEOTIDE SEQUENCE [LARGE SCALE GENOMIC DNA]</scope>
    <source>
        <strain>1021</strain>
    </source>
</reference>